<sequence>MICKYIYLAIFVFGTARIPKPSACLPGDFWKTKQEIEVQKKIDEFNQYRISALWSMVSKMEDPTLSGLDGRYIVVDQNQLYLSPISKKSEKLIFRFNLNHRGYLEVKSGFRAFIENKYSPLVFHATSWTNGFSIDVQKTNPISSYTPFVMQYLNSPWFSACRVESGNWQVFVGRMNMNEHEHCYPMSLIMKREDTWLRYYHKNNRNPIDWKLVQDCAMWPDGYPGTGRESEKGSNLEAITR</sequence>
<organism>
    <name type="scientific">Schizosaccharomyces pombe (strain 972 / ATCC 24843)</name>
    <name type="common">Fission yeast</name>
    <dbReference type="NCBI Taxonomy" id="284812"/>
    <lineage>
        <taxon>Eukaryota</taxon>
        <taxon>Fungi</taxon>
        <taxon>Dikarya</taxon>
        <taxon>Ascomycota</taxon>
        <taxon>Taphrinomycotina</taxon>
        <taxon>Schizosaccharomycetes</taxon>
        <taxon>Schizosaccharomycetales</taxon>
        <taxon>Schizosaccharomycetaceae</taxon>
        <taxon>Schizosaccharomyces</taxon>
    </lineage>
</organism>
<keyword id="KW-0469">Meiosis</keyword>
<keyword id="KW-0496">Mitochondrion</keyword>
<keyword id="KW-1185">Reference proteome</keyword>
<dbReference type="EMBL" id="CU329670">
    <property type="protein sequence ID" value="CAB52166.2"/>
    <property type="molecule type" value="Genomic_DNA"/>
</dbReference>
<dbReference type="PIR" id="T39180">
    <property type="entry name" value="T39180"/>
</dbReference>
<dbReference type="RefSeq" id="NP_593954.1">
    <property type="nucleotide sequence ID" value="NM_001019381.2"/>
</dbReference>
<dbReference type="BioGRID" id="280009">
    <property type="interactions" value="10"/>
</dbReference>
<dbReference type="PaxDb" id="4896-SPAC8F11.05c.1"/>
<dbReference type="EnsemblFungi" id="SPAC8F11.05c.1">
    <property type="protein sequence ID" value="SPAC8F11.05c.1:pep"/>
    <property type="gene ID" value="SPAC8F11.05c"/>
</dbReference>
<dbReference type="GeneID" id="2543594"/>
<dbReference type="KEGG" id="spo:2543594"/>
<dbReference type="PomBase" id="SPAC8F11.05c">
    <property type="gene designation" value="mug130"/>
</dbReference>
<dbReference type="VEuPathDB" id="FungiDB:SPAC8F11.05c"/>
<dbReference type="HOGENOM" id="CLU_1152323_0_0_1"/>
<dbReference type="InParanoid" id="Q9UT31"/>
<dbReference type="OMA" id="IMKREDT"/>
<dbReference type="PRO" id="PR:Q9UT31"/>
<dbReference type="Proteomes" id="UP000002485">
    <property type="component" value="Chromosome I"/>
</dbReference>
<dbReference type="GO" id="GO:0005739">
    <property type="term" value="C:mitochondrion"/>
    <property type="evidence" value="ECO:0007005"/>
    <property type="project" value="PomBase"/>
</dbReference>
<dbReference type="GO" id="GO:0051321">
    <property type="term" value="P:meiotic cell cycle"/>
    <property type="evidence" value="ECO:0007669"/>
    <property type="project" value="UniProtKB-KW"/>
</dbReference>
<feature type="chain" id="PRO_0000014211" description="Meiotically up-regulated gene 130 protein">
    <location>
        <begin position="1"/>
        <end position="241"/>
    </location>
</feature>
<accession>Q9UT31</accession>
<proteinExistence type="evidence at protein level"/>
<evidence type="ECO:0000269" key="1">
    <source>
    </source>
</evidence>
<evidence type="ECO:0000269" key="2">
    <source>
    </source>
</evidence>
<protein>
    <recommendedName>
        <fullName>Meiotically up-regulated gene 130 protein</fullName>
    </recommendedName>
</protein>
<gene>
    <name type="primary">mug130</name>
    <name type="ORF">SPAC8F11.05c</name>
</gene>
<name>MU130_SCHPO</name>
<reference key="1">
    <citation type="journal article" date="2002" name="Nature">
        <title>The genome sequence of Schizosaccharomyces pombe.</title>
        <authorList>
            <person name="Wood V."/>
            <person name="Gwilliam R."/>
            <person name="Rajandream M.A."/>
            <person name="Lyne M.H."/>
            <person name="Lyne R."/>
            <person name="Stewart A."/>
            <person name="Sgouros J.G."/>
            <person name="Peat N."/>
            <person name="Hayles J."/>
            <person name="Baker S.G."/>
            <person name="Basham D."/>
            <person name="Bowman S."/>
            <person name="Brooks K."/>
            <person name="Brown D."/>
            <person name="Brown S."/>
            <person name="Chillingworth T."/>
            <person name="Churcher C.M."/>
            <person name="Collins M."/>
            <person name="Connor R."/>
            <person name="Cronin A."/>
            <person name="Davis P."/>
            <person name="Feltwell T."/>
            <person name="Fraser A."/>
            <person name="Gentles S."/>
            <person name="Goble A."/>
            <person name="Hamlin N."/>
            <person name="Harris D.E."/>
            <person name="Hidalgo J."/>
            <person name="Hodgson G."/>
            <person name="Holroyd S."/>
            <person name="Hornsby T."/>
            <person name="Howarth S."/>
            <person name="Huckle E.J."/>
            <person name="Hunt S."/>
            <person name="Jagels K."/>
            <person name="James K.D."/>
            <person name="Jones L."/>
            <person name="Jones M."/>
            <person name="Leather S."/>
            <person name="McDonald S."/>
            <person name="McLean J."/>
            <person name="Mooney P."/>
            <person name="Moule S."/>
            <person name="Mungall K.L."/>
            <person name="Murphy L.D."/>
            <person name="Niblett D."/>
            <person name="Odell C."/>
            <person name="Oliver K."/>
            <person name="O'Neil S."/>
            <person name="Pearson D."/>
            <person name="Quail M.A."/>
            <person name="Rabbinowitsch E."/>
            <person name="Rutherford K.M."/>
            <person name="Rutter S."/>
            <person name="Saunders D."/>
            <person name="Seeger K."/>
            <person name="Sharp S."/>
            <person name="Skelton J."/>
            <person name="Simmonds M.N."/>
            <person name="Squares R."/>
            <person name="Squares S."/>
            <person name="Stevens K."/>
            <person name="Taylor K."/>
            <person name="Taylor R.G."/>
            <person name="Tivey A."/>
            <person name="Walsh S.V."/>
            <person name="Warren T."/>
            <person name="Whitehead S."/>
            <person name="Woodward J.R."/>
            <person name="Volckaert G."/>
            <person name="Aert R."/>
            <person name="Robben J."/>
            <person name="Grymonprez B."/>
            <person name="Weltjens I."/>
            <person name="Vanstreels E."/>
            <person name="Rieger M."/>
            <person name="Schaefer M."/>
            <person name="Mueller-Auer S."/>
            <person name="Gabel C."/>
            <person name="Fuchs M."/>
            <person name="Duesterhoeft A."/>
            <person name="Fritzc C."/>
            <person name="Holzer E."/>
            <person name="Moestl D."/>
            <person name="Hilbert H."/>
            <person name="Borzym K."/>
            <person name="Langer I."/>
            <person name="Beck A."/>
            <person name="Lehrach H."/>
            <person name="Reinhardt R."/>
            <person name="Pohl T.M."/>
            <person name="Eger P."/>
            <person name="Zimmermann W."/>
            <person name="Wedler H."/>
            <person name="Wambutt R."/>
            <person name="Purnelle B."/>
            <person name="Goffeau A."/>
            <person name="Cadieu E."/>
            <person name="Dreano S."/>
            <person name="Gloux S."/>
            <person name="Lelaure V."/>
            <person name="Mottier S."/>
            <person name="Galibert F."/>
            <person name="Aves S.J."/>
            <person name="Xiang Z."/>
            <person name="Hunt C."/>
            <person name="Moore K."/>
            <person name="Hurst S.M."/>
            <person name="Lucas M."/>
            <person name="Rochet M."/>
            <person name="Gaillardin C."/>
            <person name="Tallada V.A."/>
            <person name="Garzon A."/>
            <person name="Thode G."/>
            <person name="Daga R.R."/>
            <person name="Cruzado L."/>
            <person name="Jimenez J."/>
            <person name="Sanchez M."/>
            <person name="del Rey F."/>
            <person name="Benito J."/>
            <person name="Dominguez A."/>
            <person name="Revuelta J.L."/>
            <person name="Moreno S."/>
            <person name="Armstrong J."/>
            <person name="Forsburg S.L."/>
            <person name="Cerutti L."/>
            <person name="Lowe T."/>
            <person name="McCombie W.R."/>
            <person name="Paulsen I."/>
            <person name="Potashkin J."/>
            <person name="Shpakovski G.V."/>
            <person name="Ussery D."/>
            <person name="Barrell B.G."/>
            <person name="Nurse P."/>
        </authorList>
    </citation>
    <scope>NUCLEOTIDE SEQUENCE [LARGE SCALE GENOMIC DNA]</scope>
    <source>
        <strain>972 / ATCC 24843</strain>
    </source>
</reference>
<reference key="2">
    <citation type="journal article" date="2005" name="Curr. Biol.">
        <title>A large-scale screen in S. pombe identifies seven novel genes required for critical meiotic events.</title>
        <authorList>
            <person name="Martin-Castellanos C."/>
            <person name="Blanco M."/>
            <person name="Rozalen A.E."/>
            <person name="Perez-Hidalgo L."/>
            <person name="Garcia A.I."/>
            <person name="Conde F."/>
            <person name="Mata J."/>
            <person name="Ellermeier C."/>
            <person name="Davis L."/>
            <person name="San-Segundo P."/>
            <person name="Smith G.R."/>
            <person name="Moreno S."/>
        </authorList>
    </citation>
    <scope>FUNCTION IN MEIOSIS</scope>
</reference>
<reference key="3">
    <citation type="journal article" date="2006" name="Nat. Biotechnol.">
        <title>ORFeome cloning and global analysis of protein localization in the fission yeast Schizosaccharomyces pombe.</title>
        <authorList>
            <person name="Matsuyama A."/>
            <person name="Arai R."/>
            <person name="Yashiroda Y."/>
            <person name="Shirai A."/>
            <person name="Kamata A."/>
            <person name="Sekido S."/>
            <person name="Kobayashi Y."/>
            <person name="Hashimoto A."/>
            <person name="Hamamoto M."/>
            <person name="Hiraoka Y."/>
            <person name="Horinouchi S."/>
            <person name="Yoshida M."/>
        </authorList>
    </citation>
    <scope>SUBCELLULAR LOCATION [LARGE SCALE ANALYSIS]</scope>
</reference>
<comment type="function">
    <text evidence="1">Has a role in meiosis.</text>
</comment>
<comment type="subcellular location">
    <subcellularLocation>
        <location evidence="2">Mitochondrion</location>
    </subcellularLocation>
</comment>